<keyword id="KW-0963">Cytoplasm</keyword>
<keyword id="KW-0489">Methyltransferase</keyword>
<keyword id="KW-1185">Reference proteome</keyword>
<keyword id="KW-0949">S-adenosyl-L-methionine</keyword>
<keyword id="KW-0808">Transferase</keyword>
<keyword id="KW-0819">tRNA processing</keyword>
<organism>
    <name type="scientific">Photorhabdus laumondii subsp. laumondii (strain DSM 15139 / CIP 105565 / TT01)</name>
    <name type="common">Photorhabdus luminescens subsp. laumondii</name>
    <dbReference type="NCBI Taxonomy" id="243265"/>
    <lineage>
        <taxon>Bacteria</taxon>
        <taxon>Pseudomonadati</taxon>
        <taxon>Pseudomonadota</taxon>
        <taxon>Gammaproteobacteria</taxon>
        <taxon>Enterobacterales</taxon>
        <taxon>Morganellaceae</taxon>
        <taxon>Photorhabdus</taxon>
    </lineage>
</organism>
<evidence type="ECO:0000250" key="1">
    <source>
        <dbReference type="UniProtKB" id="P0AE01"/>
    </source>
</evidence>
<evidence type="ECO:0000305" key="2"/>
<gene>
    <name type="primary">trmJ</name>
    <name type="ordered locus">plu3285</name>
</gene>
<proteinExistence type="inferred from homology"/>
<feature type="chain" id="PRO_0000313858" description="tRNA (cytidine/uridine-2'-O-)-methyltransferase TrmJ">
    <location>
        <begin position="1"/>
        <end position="241"/>
    </location>
</feature>
<feature type="binding site" evidence="1">
    <location>
        <begin position="79"/>
        <end position="81"/>
    </location>
    <ligand>
        <name>S-adenosyl-L-methionine</name>
        <dbReference type="ChEBI" id="CHEBI:59789"/>
    </ligand>
</feature>
<feature type="binding site" evidence="1">
    <location>
        <position position="114"/>
    </location>
    <ligand>
        <name>S-adenosyl-L-methionine</name>
        <dbReference type="ChEBI" id="CHEBI:59789"/>
    </ligand>
</feature>
<feature type="binding site" evidence="1">
    <location>
        <position position="134"/>
    </location>
    <ligand>
        <name>S-adenosyl-L-methionine</name>
        <dbReference type="ChEBI" id="CHEBI:59789"/>
    </ligand>
</feature>
<feature type="binding site" evidence="1">
    <location>
        <begin position="141"/>
        <end position="143"/>
    </location>
    <ligand>
        <name>S-adenosyl-L-methionine</name>
        <dbReference type="ChEBI" id="CHEBI:59789"/>
    </ligand>
</feature>
<accession>Q7N222</accession>
<name>TRMJ_PHOLL</name>
<reference key="1">
    <citation type="journal article" date="2003" name="Nat. Biotechnol.">
        <title>The genome sequence of the entomopathogenic bacterium Photorhabdus luminescens.</title>
        <authorList>
            <person name="Duchaud E."/>
            <person name="Rusniok C."/>
            <person name="Frangeul L."/>
            <person name="Buchrieser C."/>
            <person name="Givaudan A."/>
            <person name="Taourit S."/>
            <person name="Bocs S."/>
            <person name="Boursaux-Eude C."/>
            <person name="Chandler M."/>
            <person name="Charles J.-F."/>
            <person name="Dassa E."/>
            <person name="Derose R."/>
            <person name="Derzelle S."/>
            <person name="Freyssinet G."/>
            <person name="Gaudriault S."/>
            <person name="Medigue C."/>
            <person name="Lanois A."/>
            <person name="Powell K."/>
            <person name="Siguier P."/>
            <person name="Vincent R."/>
            <person name="Wingate V."/>
            <person name="Zouine M."/>
            <person name="Glaser P."/>
            <person name="Boemare N."/>
            <person name="Danchin A."/>
            <person name="Kunst F."/>
        </authorList>
    </citation>
    <scope>NUCLEOTIDE SEQUENCE [LARGE SCALE GENOMIC DNA]</scope>
    <source>
        <strain>DSM 15139 / CIP 105565 / TT01</strain>
    </source>
</reference>
<dbReference type="EC" id="2.1.1.200" evidence="1"/>
<dbReference type="EMBL" id="BX571870">
    <property type="protein sequence ID" value="CAE15659.1"/>
    <property type="molecule type" value="Genomic_DNA"/>
</dbReference>
<dbReference type="RefSeq" id="WP_011147480.1">
    <property type="nucleotide sequence ID" value="NC_005126.1"/>
</dbReference>
<dbReference type="SMR" id="Q7N222"/>
<dbReference type="STRING" id="243265.plu3285"/>
<dbReference type="GeneID" id="48849540"/>
<dbReference type="KEGG" id="plu:plu3285"/>
<dbReference type="eggNOG" id="COG0565">
    <property type="taxonomic scope" value="Bacteria"/>
</dbReference>
<dbReference type="HOGENOM" id="CLU_056931_0_1_6"/>
<dbReference type="OrthoDB" id="9806346at2"/>
<dbReference type="Proteomes" id="UP000002514">
    <property type="component" value="Chromosome"/>
</dbReference>
<dbReference type="GO" id="GO:0005829">
    <property type="term" value="C:cytosol"/>
    <property type="evidence" value="ECO:0007669"/>
    <property type="project" value="TreeGrafter"/>
</dbReference>
<dbReference type="GO" id="GO:0003723">
    <property type="term" value="F:RNA binding"/>
    <property type="evidence" value="ECO:0007669"/>
    <property type="project" value="InterPro"/>
</dbReference>
<dbReference type="GO" id="GO:0160206">
    <property type="term" value="F:tRNA (cytidine(32)/uridine(32)-2'-O)-methyltransferase activity"/>
    <property type="evidence" value="ECO:0007669"/>
    <property type="project" value="UniProtKB-EC"/>
</dbReference>
<dbReference type="GO" id="GO:0002128">
    <property type="term" value="P:tRNA nucleoside ribose methylation"/>
    <property type="evidence" value="ECO:0007669"/>
    <property type="project" value="TreeGrafter"/>
</dbReference>
<dbReference type="CDD" id="cd18093">
    <property type="entry name" value="SpoU-like_TrmJ"/>
    <property type="match status" value="1"/>
</dbReference>
<dbReference type="FunFam" id="1.10.8.590:FF:000001">
    <property type="entry name" value="tRNA:Cm32/Um32 methyltransferase"/>
    <property type="match status" value="1"/>
</dbReference>
<dbReference type="FunFam" id="3.40.1280.10:FF:000006">
    <property type="entry name" value="Uncharacterized tRNA/rRNA methyltransferase HI_0380"/>
    <property type="match status" value="1"/>
</dbReference>
<dbReference type="Gene3D" id="1.10.8.590">
    <property type="match status" value="1"/>
</dbReference>
<dbReference type="Gene3D" id="3.40.1280.10">
    <property type="match status" value="1"/>
</dbReference>
<dbReference type="InterPro" id="IPR029028">
    <property type="entry name" value="Alpha/beta_knot_MTases"/>
</dbReference>
<dbReference type="InterPro" id="IPR004384">
    <property type="entry name" value="RNA_MeTrfase_TrmJ/LasT"/>
</dbReference>
<dbReference type="InterPro" id="IPR001537">
    <property type="entry name" value="SpoU_MeTrfase"/>
</dbReference>
<dbReference type="InterPro" id="IPR029026">
    <property type="entry name" value="tRNA_m1G_MTases_N"/>
</dbReference>
<dbReference type="NCBIfam" id="NF011694">
    <property type="entry name" value="PRK15114.1"/>
    <property type="match status" value="1"/>
</dbReference>
<dbReference type="NCBIfam" id="TIGR00050">
    <property type="entry name" value="rRNA_methyl_1"/>
    <property type="match status" value="1"/>
</dbReference>
<dbReference type="PANTHER" id="PTHR42786:SF2">
    <property type="entry name" value="TRNA (CYTIDINE_URIDINE-2'-O-)-METHYLTRANSFERASE TRMJ"/>
    <property type="match status" value="1"/>
</dbReference>
<dbReference type="PANTHER" id="PTHR42786">
    <property type="entry name" value="TRNA/RRNA METHYLTRANSFERASE"/>
    <property type="match status" value="1"/>
</dbReference>
<dbReference type="Pfam" id="PF00588">
    <property type="entry name" value="SpoU_methylase"/>
    <property type="match status" value="1"/>
</dbReference>
<dbReference type="PIRSF" id="PIRSF004808">
    <property type="entry name" value="LasT"/>
    <property type="match status" value="1"/>
</dbReference>
<dbReference type="SUPFAM" id="SSF75217">
    <property type="entry name" value="alpha/beta knot"/>
    <property type="match status" value="1"/>
</dbReference>
<sequence>MLENIRIILVETSHTGNMGSTARAMKTMGLTNLYLVNPLVQPDSHAIALSAGASDVIGHATIVDSLDKALAGCGLVIGTSARSRTLSWPMVEPRECGERSVQQAEHASVAIVFGRERVGLTNEELQKCHYHLNIPTNPEYGSLNLAMAVQLVSYEIRMAYLARQDKTEQKTDEVEYPLADDMERFYHHLECVLNDSGFIRKAHPGQIMNRLRRLFTRARPEMQELNILRGILSSVEKWAKK</sequence>
<comment type="function">
    <text evidence="1">Catalyzes the formation of 2'O-methylated cytidine (Cm32) or 2'O-methylated uridine (Um32) at position 32 in tRNA.</text>
</comment>
<comment type="catalytic activity">
    <reaction evidence="1">
        <text>cytidine(32) in tRNA + S-adenosyl-L-methionine = 2'-O-methylcytidine(32) in tRNA + S-adenosyl-L-homocysteine + H(+)</text>
        <dbReference type="Rhea" id="RHEA:42932"/>
        <dbReference type="Rhea" id="RHEA-COMP:10288"/>
        <dbReference type="Rhea" id="RHEA-COMP:10289"/>
        <dbReference type="ChEBI" id="CHEBI:15378"/>
        <dbReference type="ChEBI" id="CHEBI:57856"/>
        <dbReference type="ChEBI" id="CHEBI:59789"/>
        <dbReference type="ChEBI" id="CHEBI:74495"/>
        <dbReference type="ChEBI" id="CHEBI:82748"/>
        <dbReference type="EC" id="2.1.1.200"/>
    </reaction>
</comment>
<comment type="catalytic activity">
    <reaction evidence="1">
        <text>uridine(32) in tRNA + S-adenosyl-L-methionine = 2'-O-methyluridine(32) in tRNA + S-adenosyl-L-homocysteine + H(+)</text>
        <dbReference type="Rhea" id="RHEA:42936"/>
        <dbReference type="Rhea" id="RHEA-COMP:10107"/>
        <dbReference type="Rhea" id="RHEA-COMP:10290"/>
        <dbReference type="ChEBI" id="CHEBI:15378"/>
        <dbReference type="ChEBI" id="CHEBI:57856"/>
        <dbReference type="ChEBI" id="CHEBI:59789"/>
        <dbReference type="ChEBI" id="CHEBI:65315"/>
        <dbReference type="ChEBI" id="CHEBI:74478"/>
        <dbReference type="EC" id="2.1.1.200"/>
    </reaction>
</comment>
<comment type="subunit">
    <text evidence="1">Homodimer.</text>
</comment>
<comment type="subcellular location">
    <subcellularLocation>
        <location evidence="1">Cytoplasm</location>
    </subcellularLocation>
</comment>
<comment type="similarity">
    <text evidence="2">Belongs to the class IV-like SAM-binding methyltransferase superfamily. RNA methyltransferase TrmH family.</text>
</comment>
<protein>
    <recommendedName>
        <fullName evidence="1">tRNA (cytidine/uridine-2'-O-)-methyltransferase TrmJ</fullName>
        <ecNumber evidence="1">2.1.1.200</ecNumber>
    </recommendedName>
    <alternativeName>
        <fullName evidence="1">tRNA (cytidine(32)/uridine(32)-2'-O)-methyltransferase</fullName>
    </alternativeName>
    <alternativeName>
        <fullName evidence="1">tRNA Cm32/Um32 methyltransferase</fullName>
    </alternativeName>
</protein>